<evidence type="ECO:0000255" key="1">
    <source>
        <dbReference type="HAMAP-Rule" id="MF_00197"/>
    </source>
</evidence>
<reference key="1">
    <citation type="journal article" date="2010" name="BMC Genomics">
        <title>Complete genome sequence and lifestyle of black-pigmented Corynebacterium aurimucosum ATCC 700975 (formerly C. nigricans CN-1) isolated from a vaginal swab of a woman with spontaneous abortion.</title>
        <authorList>
            <person name="Trost E."/>
            <person name="Gotker S."/>
            <person name="Schneider J."/>
            <person name="Schneiker-Bekel S."/>
            <person name="Szczepanowski R."/>
            <person name="Tilker A."/>
            <person name="Viehoever P."/>
            <person name="Arnold W."/>
            <person name="Bekel T."/>
            <person name="Blom J."/>
            <person name="Gartemann K.H."/>
            <person name="Linke B."/>
            <person name="Goesmann A."/>
            <person name="Puhler A."/>
            <person name="Shukla S.K."/>
            <person name="Tauch A."/>
        </authorList>
    </citation>
    <scope>NUCLEOTIDE SEQUENCE [LARGE SCALE GENOMIC DNA]</scope>
    <source>
        <strain>ATCC 700975 / DSM 44827 / CIP 107346 / CN-1</strain>
    </source>
</reference>
<proteinExistence type="inferred from homology"/>
<comment type="function">
    <text evidence="1">Catalyzes the stereoinversion of LL-2,6-diaminopimelate (L,L-DAP) to meso-diaminopimelate (meso-DAP), a precursor of L-lysine and an essential component of the bacterial peptidoglycan.</text>
</comment>
<comment type="catalytic activity">
    <reaction evidence="1">
        <text>(2S,6S)-2,6-diaminopimelate = meso-2,6-diaminopimelate</text>
        <dbReference type="Rhea" id="RHEA:15393"/>
        <dbReference type="ChEBI" id="CHEBI:57609"/>
        <dbReference type="ChEBI" id="CHEBI:57791"/>
        <dbReference type="EC" id="5.1.1.7"/>
    </reaction>
</comment>
<comment type="pathway">
    <text evidence="1">Amino-acid biosynthesis; L-lysine biosynthesis via DAP pathway; DL-2,6-diaminopimelate from LL-2,6-diaminopimelate: step 1/1.</text>
</comment>
<comment type="subunit">
    <text evidence="1">Homodimer.</text>
</comment>
<comment type="subcellular location">
    <subcellularLocation>
        <location evidence="1">Cytoplasm</location>
    </subcellularLocation>
</comment>
<comment type="similarity">
    <text evidence="1">Belongs to the diaminopimelate epimerase family.</text>
</comment>
<organism>
    <name type="scientific">Corynebacterium aurimucosum (strain ATCC 700975 / DSM 44827 / CIP 107346 / CN-1)</name>
    <name type="common">Corynebacterium nigricans</name>
    <dbReference type="NCBI Taxonomy" id="548476"/>
    <lineage>
        <taxon>Bacteria</taxon>
        <taxon>Bacillati</taxon>
        <taxon>Actinomycetota</taxon>
        <taxon>Actinomycetes</taxon>
        <taxon>Mycobacteriales</taxon>
        <taxon>Corynebacteriaceae</taxon>
        <taxon>Corynebacterium</taxon>
    </lineage>
</organism>
<protein>
    <recommendedName>
        <fullName evidence="1">Diaminopimelate epimerase</fullName>
        <shortName evidence="1">DAP epimerase</shortName>
        <ecNumber evidence="1">5.1.1.7</ecNumber>
    </recommendedName>
    <alternativeName>
        <fullName evidence="1">PLP-independent amino acid racemase</fullName>
    </alternativeName>
</protein>
<dbReference type="EC" id="5.1.1.7" evidence="1"/>
<dbReference type="EMBL" id="CP001601">
    <property type="protein sequence ID" value="ACP33080.1"/>
    <property type="molecule type" value="Genomic_DNA"/>
</dbReference>
<dbReference type="RefSeq" id="WP_010190270.1">
    <property type="nucleotide sequence ID" value="NC_012590.1"/>
</dbReference>
<dbReference type="SMR" id="C3PGX6"/>
<dbReference type="STRING" id="548476.cauri_1487"/>
<dbReference type="GeneID" id="31924117"/>
<dbReference type="KEGG" id="car:cauri_1487"/>
<dbReference type="eggNOG" id="COG0253">
    <property type="taxonomic scope" value="Bacteria"/>
</dbReference>
<dbReference type="HOGENOM" id="CLU_053306_4_0_11"/>
<dbReference type="OrthoDB" id="9805408at2"/>
<dbReference type="UniPathway" id="UPA00034">
    <property type="reaction ID" value="UER00025"/>
</dbReference>
<dbReference type="Proteomes" id="UP000002077">
    <property type="component" value="Chromosome"/>
</dbReference>
<dbReference type="GO" id="GO:0005829">
    <property type="term" value="C:cytosol"/>
    <property type="evidence" value="ECO:0007669"/>
    <property type="project" value="TreeGrafter"/>
</dbReference>
<dbReference type="GO" id="GO:0008837">
    <property type="term" value="F:diaminopimelate epimerase activity"/>
    <property type="evidence" value="ECO:0007669"/>
    <property type="project" value="UniProtKB-UniRule"/>
</dbReference>
<dbReference type="GO" id="GO:0009089">
    <property type="term" value="P:lysine biosynthetic process via diaminopimelate"/>
    <property type="evidence" value="ECO:0007669"/>
    <property type="project" value="UniProtKB-UniRule"/>
</dbReference>
<dbReference type="Gene3D" id="3.10.310.10">
    <property type="entry name" value="Diaminopimelate Epimerase, Chain A, domain 1"/>
    <property type="match status" value="2"/>
</dbReference>
<dbReference type="HAMAP" id="MF_00197">
    <property type="entry name" value="DAP_epimerase"/>
    <property type="match status" value="1"/>
</dbReference>
<dbReference type="InterPro" id="IPR018510">
    <property type="entry name" value="DAP_epimerase_AS"/>
</dbReference>
<dbReference type="InterPro" id="IPR001653">
    <property type="entry name" value="DAP_epimerase_DapF"/>
</dbReference>
<dbReference type="NCBIfam" id="TIGR00652">
    <property type="entry name" value="DapF"/>
    <property type="match status" value="1"/>
</dbReference>
<dbReference type="PANTHER" id="PTHR31689:SF0">
    <property type="entry name" value="DIAMINOPIMELATE EPIMERASE"/>
    <property type="match status" value="1"/>
</dbReference>
<dbReference type="PANTHER" id="PTHR31689">
    <property type="entry name" value="DIAMINOPIMELATE EPIMERASE, CHLOROPLASTIC"/>
    <property type="match status" value="1"/>
</dbReference>
<dbReference type="Pfam" id="PF01678">
    <property type="entry name" value="DAP_epimerase"/>
    <property type="match status" value="2"/>
</dbReference>
<dbReference type="SUPFAM" id="SSF54506">
    <property type="entry name" value="Diaminopimelate epimerase-like"/>
    <property type="match status" value="2"/>
</dbReference>
<dbReference type="PROSITE" id="PS01326">
    <property type="entry name" value="DAP_EPIMERASE"/>
    <property type="match status" value="1"/>
</dbReference>
<name>DAPF_CORA7</name>
<accession>C3PGX6</accession>
<gene>
    <name evidence="1" type="primary">dapF</name>
    <name type="ordered locus">cauri_1487</name>
</gene>
<sequence>MKFAKGHGTENDFVIVEGTGPLPPEKVVALCDRRAGIGADGVLRIIRAGELLASGEIDELAPGINADDWFMDYRNADGSVAEMCGNGTRVFAHWVRSRGLLEEDTFTVGTRAGAKQVTVHSFSETEAEVSVEMGPAQVLGVSTASMAGESFAGLGVDMGNPHLAAVIPGLTAEDLAAKRLEQPVFDADFFPAGVNVELVTPLCDGVIHMRVFERGSGETRSCGTGTVAAACAALADASQVTGHVRVIVPGGEVEVEITEDGSTLTGPSRIVATGETSL</sequence>
<keyword id="KW-0028">Amino-acid biosynthesis</keyword>
<keyword id="KW-0963">Cytoplasm</keyword>
<keyword id="KW-0413">Isomerase</keyword>
<keyword id="KW-0457">Lysine biosynthesis</keyword>
<keyword id="KW-1185">Reference proteome</keyword>
<feature type="chain" id="PRO_1000124408" description="Diaminopimelate epimerase">
    <location>
        <begin position="1"/>
        <end position="278"/>
    </location>
</feature>
<feature type="active site" description="Proton donor" evidence="1">
    <location>
        <position position="84"/>
    </location>
</feature>
<feature type="active site" description="Proton acceptor" evidence="1">
    <location>
        <position position="222"/>
    </location>
</feature>
<feature type="binding site" evidence="1">
    <location>
        <position position="11"/>
    </location>
    <ligand>
        <name>substrate</name>
    </ligand>
</feature>
<feature type="binding site" evidence="1">
    <location>
        <position position="75"/>
    </location>
    <ligand>
        <name>substrate</name>
    </ligand>
</feature>
<feature type="binding site" evidence="1">
    <location>
        <begin position="85"/>
        <end position="86"/>
    </location>
    <ligand>
        <name>substrate</name>
    </ligand>
</feature>
<feature type="binding site" evidence="1">
    <location>
        <position position="160"/>
    </location>
    <ligand>
        <name>substrate</name>
    </ligand>
</feature>
<feature type="binding site" evidence="1">
    <location>
        <position position="195"/>
    </location>
    <ligand>
        <name>substrate</name>
    </ligand>
</feature>
<feature type="binding site" evidence="1">
    <location>
        <begin position="213"/>
        <end position="214"/>
    </location>
    <ligand>
        <name>substrate</name>
    </ligand>
</feature>
<feature type="binding site" evidence="1">
    <location>
        <begin position="223"/>
        <end position="224"/>
    </location>
    <ligand>
        <name>substrate</name>
    </ligand>
</feature>
<feature type="site" description="Could be important to modulate the pK values of the two catalytic cysteine residues" evidence="1">
    <location>
        <position position="162"/>
    </location>
</feature>
<feature type="site" description="Could be important to modulate the pK values of the two catalytic cysteine residues" evidence="1">
    <location>
        <position position="213"/>
    </location>
</feature>